<comment type="function">
    <text evidence="1">Catalyzes the ATP-dependent phosphorylation of N-acetyl-L-glutamate.</text>
</comment>
<comment type="catalytic activity">
    <reaction evidence="1">
        <text>N-acetyl-L-glutamate + ATP = N-acetyl-L-glutamyl 5-phosphate + ADP</text>
        <dbReference type="Rhea" id="RHEA:14629"/>
        <dbReference type="ChEBI" id="CHEBI:30616"/>
        <dbReference type="ChEBI" id="CHEBI:44337"/>
        <dbReference type="ChEBI" id="CHEBI:57936"/>
        <dbReference type="ChEBI" id="CHEBI:456216"/>
        <dbReference type="EC" id="2.7.2.8"/>
    </reaction>
</comment>
<comment type="pathway">
    <text evidence="1">Amino-acid biosynthesis; L-arginine biosynthesis; N(2)-acetyl-L-ornithine from L-glutamate: step 2/4.</text>
</comment>
<comment type="subcellular location">
    <subcellularLocation>
        <location evidence="1">Cytoplasm</location>
    </subcellularLocation>
</comment>
<comment type="similarity">
    <text evidence="1">Belongs to the acetylglutamate kinase family. ArgB subfamily.</text>
</comment>
<sequence>MNKEIQQANHSKNINKPFTDKDSIRVSVLSEALPYIQRFANKRIVIKYGGSAMADKTLQNAVFRDLALLSSVGVQIVVVHGGGPEINQWLEKLGIKPVFLDGLRITDTETMDVVEMVLTGRVNKQIVSGINNHGRLAVGLCGIDGGLIEARTLGGGSHGLVGEVAKVNTKILSPLLEEGYVPVISSVANSSDGRSHNINADTVAGELAAALGAEKLILLTDTPGILRNENDPSSLIEKIRLSEARELIDQGIVKAGMKPKVECCIRSLAQGVNAAHIIDGRTPHSLLLEVFTDAGIGTMVMGRG</sequence>
<evidence type="ECO:0000255" key="1">
    <source>
        <dbReference type="HAMAP-Rule" id="MF_00082"/>
    </source>
</evidence>
<protein>
    <recommendedName>
        <fullName evidence="1">Acetylglutamate kinase</fullName>
        <ecNumber evidence="1">2.7.2.8</ecNumber>
    </recommendedName>
    <alternativeName>
        <fullName evidence="1">N-acetyl-L-glutamate 5-phosphotransferase</fullName>
    </alternativeName>
    <alternativeName>
        <fullName evidence="1">NAG kinase</fullName>
        <shortName evidence="1">NAGK</shortName>
    </alternativeName>
</protein>
<proteinExistence type="inferred from homology"/>
<reference key="1">
    <citation type="journal article" date="2007" name="PLoS Genet.">
        <title>Patterns and implications of gene gain and loss in the evolution of Prochlorococcus.</title>
        <authorList>
            <person name="Kettler G.C."/>
            <person name="Martiny A.C."/>
            <person name="Huang K."/>
            <person name="Zucker J."/>
            <person name="Coleman M.L."/>
            <person name="Rodrigue S."/>
            <person name="Chen F."/>
            <person name="Lapidus A."/>
            <person name="Ferriera S."/>
            <person name="Johnson J."/>
            <person name="Steglich C."/>
            <person name="Church G.M."/>
            <person name="Richardson P."/>
            <person name="Chisholm S.W."/>
        </authorList>
    </citation>
    <scope>NUCLEOTIDE SEQUENCE [LARGE SCALE GENOMIC DNA]</scope>
    <source>
        <strain>NATL1A</strain>
    </source>
</reference>
<accession>A2C0V9</accession>
<name>ARGB_PROM1</name>
<gene>
    <name evidence="1" type="primary">argB</name>
    <name type="ordered locus">NATL1_05571</name>
</gene>
<feature type="chain" id="PRO_0000335655" description="Acetylglutamate kinase">
    <location>
        <begin position="1"/>
        <end position="304"/>
    </location>
</feature>
<feature type="binding site" evidence="1">
    <location>
        <begin position="82"/>
        <end position="83"/>
    </location>
    <ligand>
        <name>substrate</name>
    </ligand>
</feature>
<feature type="binding site" evidence="1">
    <location>
        <position position="104"/>
    </location>
    <ligand>
        <name>substrate</name>
    </ligand>
</feature>
<feature type="binding site" evidence="1">
    <location>
        <position position="197"/>
    </location>
    <ligand>
        <name>substrate</name>
    </ligand>
</feature>
<feature type="site" description="Transition state stabilizer" evidence="1">
    <location>
        <position position="47"/>
    </location>
</feature>
<feature type="site" description="Transition state stabilizer" evidence="1">
    <location>
        <position position="260"/>
    </location>
</feature>
<dbReference type="EC" id="2.7.2.8" evidence="1"/>
<dbReference type="EMBL" id="CP000553">
    <property type="protein sequence ID" value="ABM75119.1"/>
    <property type="molecule type" value="Genomic_DNA"/>
</dbReference>
<dbReference type="RefSeq" id="WP_011823296.1">
    <property type="nucleotide sequence ID" value="NC_008819.1"/>
</dbReference>
<dbReference type="SMR" id="A2C0V9"/>
<dbReference type="KEGG" id="pme:NATL1_05571"/>
<dbReference type="eggNOG" id="COG0548">
    <property type="taxonomic scope" value="Bacteria"/>
</dbReference>
<dbReference type="HOGENOM" id="CLU_053680_0_0_3"/>
<dbReference type="UniPathway" id="UPA00068">
    <property type="reaction ID" value="UER00107"/>
</dbReference>
<dbReference type="Proteomes" id="UP000002592">
    <property type="component" value="Chromosome"/>
</dbReference>
<dbReference type="GO" id="GO:0005737">
    <property type="term" value="C:cytoplasm"/>
    <property type="evidence" value="ECO:0007669"/>
    <property type="project" value="UniProtKB-SubCell"/>
</dbReference>
<dbReference type="GO" id="GO:0003991">
    <property type="term" value="F:acetylglutamate kinase activity"/>
    <property type="evidence" value="ECO:0007669"/>
    <property type="project" value="UniProtKB-UniRule"/>
</dbReference>
<dbReference type="GO" id="GO:0005524">
    <property type="term" value="F:ATP binding"/>
    <property type="evidence" value="ECO:0007669"/>
    <property type="project" value="UniProtKB-UniRule"/>
</dbReference>
<dbReference type="GO" id="GO:0042450">
    <property type="term" value="P:arginine biosynthetic process via ornithine"/>
    <property type="evidence" value="ECO:0007669"/>
    <property type="project" value="UniProtKB-UniRule"/>
</dbReference>
<dbReference type="GO" id="GO:0006526">
    <property type="term" value="P:L-arginine biosynthetic process"/>
    <property type="evidence" value="ECO:0007669"/>
    <property type="project" value="UniProtKB-UniPathway"/>
</dbReference>
<dbReference type="CDD" id="cd04250">
    <property type="entry name" value="AAK_NAGK-C"/>
    <property type="match status" value="1"/>
</dbReference>
<dbReference type="FunFam" id="3.40.1160.10:FF:000004">
    <property type="entry name" value="Acetylglutamate kinase"/>
    <property type="match status" value="1"/>
</dbReference>
<dbReference type="Gene3D" id="3.40.1160.10">
    <property type="entry name" value="Acetylglutamate kinase-like"/>
    <property type="match status" value="1"/>
</dbReference>
<dbReference type="HAMAP" id="MF_00082">
    <property type="entry name" value="ArgB"/>
    <property type="match status" value="1"/>
</dbReference>
<dbReference type="InterPro" id="IPR036393">
    <property type="entry name" value="AceGlu_kinase-like_sf"/>
</dbReference>
<dbReference type="InterPro" id="IPR004662">
    <property type="entry name" value="AcgluKinase_fam"/>
</dbReference>
<dbReference type="InterPro" id="IPR037528">
    <property type="entry name" value="ArgB"/>
</dbReference>
<dbReference type="InterPro" id="IPR001048">
    <property type="entry name" value="Asp/Glu/Uridylate_kinase"/>
</dbReference>
<dbReference type="InterPro" id="IPR001057">
    <property type="entry name" value="Glu/AcGlu_kinase"/>
</dbReference>
<dbReference type="InterPro" id="IPR041727">
    <property type="entry name" value="NAGK-C"/>
</dbReference>
<dbReference type="NCBIfam" id="TIGR00761">
    <property type="entry name" value="argB"/>
    <property type="match status" value="1"/>
</dbReference>
<dbReference type="PANTHER" id="PTHR23342">
    <property type="entry name" value="N-ACETYLGLUTAMATE SYNTHASE"/>
    <property type="match status" value="1"/>
</dbReference>
<dbReference type="PANTHER" id="PTHR23342:SF0">
    <property type="entry name" value="N-ACETYLGLUTAMATE SYNTHASE, MITOCHONDRIAL"/>
    <property type="match status" value="1"/>
</dbReference>
<dbReference type="Pfam" id="PF00696">
    <property type="entry name" value="AA_kinase"/>
    <property type="match status" value="1"/>
</dbReference>
<dbReference type="PIRSF" id="PIRSF000728">
    <property type="entry name" value="NAGK"/>
    <property type="match status" value="1"/>
</dbReference>
<dbReference type="PRINTS" id="PR00474">
    <property type="entry name" value="GLU5KINASE"/>
</dbReference>
<dbReference type="SUPFAM" id="SSF53633">
    <property type="entry name" value="Carbamate kinase-like"/>
    <property type="match status" value="1"/>
</dbReference>
<keyword id="KW-0028">Amino-acid biosynthesis</keyword>
<keyword id="KW-0055">Arginine biosynthesis</keyword>
<keyword id="KW-0067">ATP-binding</keyword>
<keyword id="KW-0963">Cytoplasm</keyword>
<keyword id="KW-0418">Kinase</keyword>
<keyword id="KW-0547">Nucleotide-binding</keyword>
<keyword id="KW-0808">Transferase</keyword>
<organism>
    <name type="scientific">Prochlorococcus marinus (strain NATL1A)</name>
    <dbReference type="NCBI Taxonomy" id="167555"/>
    <lineage>
        <taxon>Bacteria</taxon>
        <taxon>Bacillati</taxon>
        <taxon>Cyanobacteriota</taxon>
        <taxon>Cyanophyceae</taxon>
        <taxon>Synechococcales</taxon>
        <taxon>Prochlorococcaceae</taxon>
        <taxon>Prochlorococcus</taxon>
    </lineage>
</organism>